<protein>
    <recommendedName>
        <fullName evidence="1">Methionyl-tRNA formyltransferase</fullName>
        <ecNumber evidence="1">2.1.2.9</ecNumber>
    </recommendedName>
</protein>
<comment type="function">
    <text evidence="1">Attaches a formyl group to the free amino group of methionyl-tRNA(fMet). The formyl group appears to play a dual role in the initiator identity of N-formylmethionyl-tRNA by promoting its recognition by IF2 and preventing the misappropriation of this tRNA by the elongation apparatus.</text>
</comment>
<comment type="catalytic activity">
    <reaction evidence="1">
        <text>L-methionyl-tRNA(fMet) + (6R)-10-formyltetrahydrofolate = N-formyl-L-methionyl-tRNA(fMet) + (6S)-5,6,7,8-tetrahydrofolate + H(+)</text>
        <dbReference type="Rhea" id="RHEA:24380"/>
        <dbReference type="Rhea" id="RHEA-COMP:9952"/>
        <dbReference type="Rhea" id="RHEA-COMP:9953"/>
        <dbReference type="ChEBI" id="CHEBI:15378"/>
        <dbReference type="ChEBI" id="CHEBI:57453"/>
        <dbReference type="ChEBI" id="CHEBI:78530"/>
        <dbReference type="ChEBI" id="CHEBI:78844"/>
        <dbReference type="ChEBI" id="CHEBI:195366"/>
        <dbReference type="EC" id="2.1.2.9"/>
    </reaction>
</comment>
<comment type="similarity">
    <text evidence="1">Belongs to the Fmt family.</text>
</comment>
<sequence length="337" mass="35445">MAQEKDCRIVFMGTPGFAAASLRRLAAWPRAHIVAVYTQPDRPAGRGQKLAMSAVKKLALELGIPVCQPASLKGAEAQAELAAFRPDVLAVAAYGLILPDAVLDMPRLAPVNVHASILPGLRGAAPIQRAVMEGWQPGARAGISIMRIGSRLDAGPVYAMGDTPIGEHTSGSLHDALAELGAELLVTVLDDLMEGRAVAVEQDESLATHAAKLGKRDGYINWTRSAAEAHAQIRGVTPRPGARTVLHLDAGTDFEARSMPLIVSPGTIGETAAGTAPGSVRHDGQDISIACGDCWYTLGMVRPEGRKDMPVRDLLNGSLKNLPQGVCGEARSPEESL</sequence>
<reference key="1">
    <citation type="submission" date="2009-01" db="EMBL/GenBank/DDBJ databases">
        <title>Complete sequence of Desulfovibrio desulfuricans subsp. desulfuricans str. ATCC 27774.</title>
        <authorList>
            <consortium name="US DOE Joint Genome Institute"/>
            <person name="Lucas S."/>
            <person name="Copeland A."/>
            <person name="Lapidus A."/>
            <person name="Glavina del Rio T."/>
            <person name="Tice H."/>
            <person name="Bruce D."/>
            <person name="Goodwin L."/>
            <person name="Pitluck S."/>
            <person name="Sims D."/>
            <person name="Lu M."/>
            <person name="Kiss H."/>
            <person name="Meineke L."/>
            <person name="Brettin T."/>
            <person name="Detter J.C."/>
            <person name="Han C."/>
            <person name="Larimer F."/>
            <person name="Land M."/>
            <person name="Hauser L."/>
            <person name="Kyrpides N."/>
            <person name="Ovchinnikova G."/>
            <person name="Hazen T.C."/>
        </authorList>
    </citation>
    <scope>NUCLEOTIDE SEQUENCE [LARGE SCALE GENOMIC DNA]</scope>
    <source>
        <strain>ATCC 27774 / DSM 6949 / MB</strain>
    </source>
</reference>
<name>FMT_DESDA</name>
<proteinExistence type="inferred from homology"/>
<dbReference type="EC" id="2.1.2.9" evidence="1"/>
<dbReference type="EMBL" id="CP001358">
    <property type="protein sequence ID" value="ACL47932.1"/>
    <property type="molecule type" value="Genomic_DNA"/>
</dbReference>
<dbReference type="SMR" id="B8J1H5"/>
<dbReference type="STRING" id="525146.Ddes_0012"/>
<dbReference type="KEGG" id="dds:Ddes_0012"/>
<dbReference type="eggNOG" id="COG0223">
    <property type="taxonomic scope" value="Bacteria"/>
</dbReference>
<dbReference type="HOGENOM" id="CLU_033347_1_1_7"/>
<dbReference type="GO" id="GO:0005829">
    <property type="term" value="C:cytosol"/>
    <property type="evidence" value="ECO:0007669"/>
    <property type="project" value="TreeGrafter"/>
</dbReference>
<dbReference type="GO" id="GO:0004479">
    <property type="term" value="F:methionyl-tRNA formyltransferase activity"/>
    <property type="evidence" value="ECO:0007669"/>
    <property type="project" value="UniProtKB-UniRule"/>
</dbReference>
<dbReference type="CDD" id="cd08646">
    <property type="entry name" value="FMT_core_Met-tRNA-FMT_N"/>
    <property type="match status" value="1"/>
</dbReference>
<dbReference type="CDD" id="cd08704">
    <property type="entry name" value="Met_tRNA_FMT_C"/>
    <property type="match status" value="1"/>
</dbReference>
<dbReference type="Gene3D" id="3.40.50.12230">
    <property type="match status" value="1"/>
</dbReference>
<dbReference type="HAMAP" id="MF_00182">
    <property type="entry name" value="Formyl_trans"/>
    <property type="match status" value="1"/>
</dbReference>
<dbReference type="InterPro" id="IPR005794">
    <property type="entry name" value="Fmt"/>
</dbReference>
<dbReference type="InterPro" id="IPR005793">
    <property type="entry name" value="Formyl_trans_C"/>
</dbReference>
<dbReference type="InterPro" id="IPR002376">
    <property type="entry name" value="Formyl_transf_N"/>
</dbReference>
<dbReference type="InterPro" id="IPR036477">
    <property type="entry name" value="Formyl_transf_N_sf"/>
</dbReference>
<dbReference type="InterPro" id="IPR011034">
    <property type="entry name" value="Formyl_transferase-like_C_sf"/>
</dbReference>
<dbReference type="InterPro" id="IPR044135">
    <property type="entry name" value="Met-tRNA-FMT_C"/>
</dbReference>
<dbReference type="InterPro" id="IPR041711">
    <property type="entry name" value="Met-tRNA-FMT_N"/>
</dbReference>
<dbReference type="NCBIfam" id="TIGR00460">
    <property type="entry name" value="fmt"/>
    <property type="match status" value="1"/>
</dbReference>
<dbReference type="PANTHER" id="PTHR11138">
    <property type="entry name" value="METHIONYL-TRNA FORMYLTRANSFERASE"/>
    <property type="match status" value="1"/>
</dbReference>
<dbReference type="PANTHER" id="PTHR11138:SF5">
    <property type="entry name" value="METHIONYL-TRNA FORMYLTRANSFERASE, MITOCHONDRIAL"/>
    <property type="match status" value="1"/>
</dbReference>
<dbReference type="Pfam" id="PF02911">
    <property type="entry name" value="Formyl_trans_C"/>
    <property type="match status" value="1"/>
</dbReference>
<dbReference type="Pfam" id="PF00551">
    <property type="entry name" value="Formyl_trans_N"/>
    <property type="match status" value="1"/>
</dbReference>
<dbReference type="SUPFAM" id="SSF50486">
    <property type="entry name" value="FMT C-terminal domain-like"/>
    <property type="match status" value="1"/>
</dbReference>
<dbReference type="SUPFAM" id="SSF53328">
    <property type="entry name" value="Formyltransferase"/>
    <property type="match status" value="1"/>
</dbReference>
<keyword id="KW-0648">Protein biosynthesis</keyword>
<keyword id="KW-0808">Transferase</keyword>
<organism>
    <name type="scientific">Desulfovibrio desulfuricans (strain ATCC 27774 / DSM 6949 / MB)</name>
    <dbReference type="NCBI Taxonomy" id="525146"/>
    <lineage>
        <taxon>Bacteria</taxon>
        <taxon>Pseudomonadati</taxon>
        <taxon>Thermodesulfobacteriota</taxon>
        <taxon>Desulfovibrionia</taxon>
        <taxon>Desulfovibrionales</taxon>
        <taxon>Desulfovibrionaceae</taxon>
        <taxon>Desulfovibrio</taxon>
    </lineage>
</organism>
<gene>
    <name evidence="1" type="primary">fmt</name>
    <name type="ordered locus">Ddes_0012</name>
</gene>
<evidence type="ECO:0000255" key="1">
    <source>
        <dbReference type="HAMAP-Rule" id="MF_00182"/>
    </source>
</evidence>
<feature type="chain" id="PRO_1000190021" description="Methionyl-tRNA formyltransferase">
    <location>
        <begin position="1"/>
        <end position="337"/>
    </location>
</feature>
<feature type="binding site" evidence="1">
    <location>
        <begin position="116"/>
        <end position="119"/>
    </location>
    <ligand>
        <name>(6S)-5,6,7,8-tetrahydrofolate</name>
        <dbReference type="ChEBI" id="CHEBI:57453"/>
    </ligand>
</feature>
<accession>B8J1H5</accession>